<dbReference type="EMBL" id="AM421808">
    <property type="protein sequence ID" value="CAM09800.1"/>
    <property type="molecule type" value="Genomic_DNA"/>
</dbReference>
<dbReference type="RefSeq" id="WP_002214370.1">
    <property type="nucleotide sequence ID" value="NC_008767.1"/>
</dbReference>
<dbReference type="SMR" id="A1KSH0"/>
<dbReference type="GeneID" id="93386624"/>
<dbReference type="KEGG" id="nmc:NMC0502"/>
<dbReference type="HOGENOM" id="CLU_057217_6_2_4"/>
<dbReference type="Proteomes" id="UP000002286">
    <property type="component" value="Chromosome"/>
</dbReference>
<dbReference type="GO" id="GO:0005829">
    <property type="term" value="C:cytosol"/>
    <property type="evidence" value="ECO:0007669"/>
    <property type="project" value="TreeGrafter"/>
</dbReference>
<dbReference type="GO" id="GO:0000774">
    <property type="term" value="F:adenyl-nucleotide exchange factor activity"/>
    <property type="evidence" value="ECO:0007669"/>
    <property type="project" value="InterPro"/>
</dbReference>
<dbReference type="GO" id="GO:0042803">
    <property type="term" value="F:protein homodimerization activity"/>
    <property type="evidence" value="ECO:0007669"/>
    <property type="project" value="InterPro"/>
</dbReference>
<dbReference type="GO" id="GO:0051087">
    <property type="term" value="F:protein-folding chaperone binding"/>
    <property type="evidence" value="ECO:0007669"/>
    <property type="project" value="InterPro"/>
</dbReference>
<dbReference type="GO" id="GO:0051082">
    <property type="term" value="F:unfolded protein binding"/>
    <property type="evidence" value="ECO:0007669"/>
    <property type="project" value="TreeGrafter"/>
</dbReference>
<dbReference type="GO" id="GO:0006457">
    <property type="term" value="P:protein folding"/>
    <property type="evidence" value="ECO:0007669"/>
    <property type="project" value="InterPro"/>
</dbReference>
<dbReference type="CDD" id="cd00446">
    <property type="entry name" value="GrpE"/>
    <property type="match status" value="1"/>
</dbReference>
<dbReference type="FunFam" id="2.30.22.10:FF:000001">
    <property type="entry name" value="Protein GrpE"/>
    <property type="match status" value="1"/>
</dbReference>
<dbReference type="Gene3D" id="3.90.20.20">
    <property type="match status" value="1"/>
</dbReference>
<dbReference type="Gene3D" id="2.30.22.10">
    <property type="entry name" value="Head domain of nucleotide exchange factor GrpE"/>
    <property type="match status" value="1"/>
</dbReference>
<dbReference type="HAMAP" id="MF_01151">
    <property type="entry name" value="GrpE"/>
    <property type="match status" value="1"/>
</dbReference>
<dbReference type="InterPro" id="IPR000740">
    <property type="entry name" value="GrpE"/>
</dbReference>
<dbReference type="InterPro" id="IPR013805">
    <property type="entry name" value="GrpE_coiled_coil"/>
</dbReference>
<dbReference type="InterPro" id="IPR009012">
    <property type="entry name" value="GrpE_head"/>
</dbReference>
<dbReference type="NCBIfam" id="NF010737">
    <property type="entry name" value="PRK14139.1"/>
    <property type="match status" value="1"/>
</dbReference>
<dbReference type="NCBIfam" id="NF010738">
    <property type="entry name" value="PRK14140.1"/>
    <property type="match status" value="1"/>
</dbReference>
<dbReference type="PANTHER" id="PTHR21237">
    <property type="entry name" value="GRPE PROTEIN"/>
    <property type="match status" value="1"/>
</dbReference>
<dbReference type="PANTHER" id="PTHR21237:SF23">
    <property type="entry name" value="GRPE PROTEIN HOMOLOG, MITOCHONDRIAL"/>
    <property type="match status" value="1"/>
</dbReference>
<dbReference type="Pfam" id="PF01025">
    <property type="entry name" value="GrpE"/>
    <property type="match status" value="1"/>
</dbReference>
<dbReference type="PRINTS" id="PR00773">
    <property type="entry name" value="GRPEPROTEIN"/>
</dbReference>
<dbReference type="SUPFAM" id="SSF58014">
    <property type="entry name" value="Coiled-coil domain of nucleotide exchange factor GrpE"/>
    <property type="match status" value="1"/>
</dbReference>
<dbReference type="SUPFAM" id="SSF51064">
    <property type="entry name" value="Head domain of nucleotide exchange factor GrpE"/>
    <property type="match status" value="1"/>
</dbReference>
<dbReference type="PROSITE" id="PS01071">
    <property type="entry name" value="GRPE"/>
    <property type="match status" value="1"/>
</dbReference>
<gene>
    <name evidence="1" type="primary">grpE</name>
    <name type="ordered locus">NMC0502</name>
</gene>
<reference key="1">
    <citation type="journal article" date="2007" name="PLoS Genet.">
        <title>Meningococcal genetic variation mechanisms viewed through comparative analysis of serogroup C strain FAM18.</title>
        <authorList>
            <person name="Bentley S.D."/>
            <person name="Vernikos G.S."/>
            <person name="Snyder L.A.S."/>
            <person name="Churcher C."/>
            <person name="Arrowsmith C."/>
            <person name="Chillingworth T."/>
            <person name="Cronin A."/>
            <person name="Davis P.H."/>
            <person name="Holroyd N.E."/>
            <person name="Jagels K."/>
            <person name="Maddison M."/>
            <person name="Moule S."/>
            <person name="Rabbinowitsch E."/>
            <person name="Sharp S."/>
            <person name="Unwin L."/>
            <person name="Whitehead S."/>
            <person name="Quail M.A."/>
            <person name="Achtman M."/>
            <person name="Barrell B.G."/>
            <person name="Saunders N.J."/>
            <person name="Parkhill J."/>
        </authorList>
    </citation>
    <scope>NUCLEOTIDE SEQUENCE [LARGE SCALE GENOMIC DNA]</scope>
    <source>
        <strain>ATCC 700532 / DSM 15464 / FAM18</strain>
    </source>
</reference>
<sequence>MSEQTQQQNSEEAVENVEAVETVETVGNADGVQEQAAAEPAYEDLQARIAELEAQLKDEQLRALANEQNLRRRHQQEIADTHKFAGQKFAVEMLPVKDYLEMALLDQSGNFDALKMGVQMTLNELQKAFDATQIKEINPKAGDKLDPNIHQAMQAVASEQEPNTVVGVMKKGYTLSDRVLRPAMVTVAQKEA</sequence>
<organism>
    <name type="scientific">Neisseria meningitidis serogroup C / serotype 2a (strain ATCC 700532 / DSM 15464 / FAM18)</name>
    <dbReference type="NCBI Taxonomy" id="272831"/>
    <lineage>
        <taxon>Bacteria</taxon>
        <taxon>Pseudomonadati</taxon>
        <taxon>Pseudomonadota</taxon>
        <taxon>Betaproteobacteria</taxon>
        <taxon>Neisseriales</taxon>
        <taxon>Neisseriaceae</taxon>
        <taxon>Neisseria</taxon>
    </lineage>
</organism>
<feature type="chain" id="PRO_1000137588" description="Protein GrpE">
    <location>
        <begin position="1"/>
        <end position="192"/>
    </location>
</feature>
<name>GRPE_NEIMF</name>
<protein>
    <recommendedName>
        <fullName evidence="1">Protein GrpE</fullName>
    </recommendedName>
    <alternativeName>
        <fullName evidence="1">HSP-70 cofactor</fullName>
    </alternativeName>
</protein>
<comment type="function">
    <text evidence="1">Participates actively in the response to hyperosmotic and heat shock by preventing the aggregation of stress-denatured proteins, in association with DnaK and GrpE. It is the nucleotide exchange factor for DnaK and may function as a thermosensor. Unfolded proteins bind initially to DnaJ; upon interaction with the DnaJ-bound protein, DnaK hydrolyzes its bound ATP, resulting in the formation of a stable complex. GrpE releases ADP from DnaK; ATP binding to DnaK triggers the release of the substrate protein, thus completing the reaction cycle. Several rounds of ATP-dependent interactions between DnaJ, DnaK and GrpE are required for fully efficient folding.</text>
</comment>
<comment type="subunit">
    <text evidence="1">Homodimer.</text>
</comment>
<comment type="subcellular location">
    <subcellularLocation>
        <location evidence="1">Cytoplasm</location>
    </subcellularLocation>
</comment>
<comment type="similarity">
    <text evidence="1">Belongs to the GrpE family.</text>
</comment>
<accession>A1KSH0</accession>
<keyword id="KW-0143">Chaperone</keyword>
<keyword id="KW-0963">Cytoplasm</keyword>
<keyword id="KW-0346">Stress response</keyword>
<proteinExistence type="inferred from homology"/>
<evidence type="ECO:0000255" key="1">
    <source>
        <dbReference type="HAMAP-Rule" id="MF_01151"/>
    </source>
</evidence>